<protein>
    <recommendedName>
        <fullName evidence="1">Large ribosomal subunit protein bL35</fullName>
    </recommendedName>
    <alternativeName>
        <fullName evidence="2">50S ribosomal protein L35</fullName>
    </alternativeName>
</protein>
<comment type="similarity">
    <text evidence="1">Belongs to the bacterial ribosomal protein bL35 family.</text>
</comment>
<comment type="sequence caution" evidence="2">
    <conflict type="erroneous initiation">
        <sequence resource="EMBL-CDS" id="AAN68079"/>
    </conflict>
</comment>
<dbReference type="EMBL" id="AE015451">
    <property type="protein sequence ID" value="AAN68079.1"/>
    <property type="status" value="ALT_INIT"/>
    <property type="molecule type" value="Genomic_DNA"/>
</dbReference>
<dbReference type="RefSeq" id="NP_744615.3">
    <property type="nucleotide sequence ID" value="NC_002947.4"/>
</dbReference>
<dbReference type="RefSeq" id="WP_003250667.1">
    <property type="nucleotide sequence ID" value="NZ_CP169744.1"/>
</dbReference>
<dbReference type="SMR" id="Q88K25"/>
<dbReference type="STRING" id="160488.PP_2467"/>
<dbReference type="PaxDb" id="160488-PP_2467"/>
<dbReference type="GeneID" id="97167548"/>
<dbReference type="KEGG" id="ppu:PP_2467"/>
<dbReference type="PATRIC" id="fig|160488.4.peg.2613"/>
<dbReference type="eggNOG" id="COG0291">
    <property type="taxonomic scope" value="Bacteria"/>
</dbReference>
<dbReference type="HOGENOM" id="CLU_169643_1_1_6"/>
<dbReference type="OrthoDB" id="47476at2"/>
<dbReference type="PhylomeDB" id="Q88K25"/>
<dbReference type="Proteomes" id="UP000000556">
    <property type="component" value="Chromosome"/>
</dbReference>
<dbReference type="GO" id="GO:0022625">
    <property type="term" value="C:cytosolic large ribosomal subunit"/>
    <property type="evidence" value="ECO:0007669"/>
    <property type="project" value="TreeGrafter"/>
</dbReference>
<dbReference type="GO" id="GO:0003735">
    <property type="term" value="F:structural constituent of ribosome"/>
    <property type="evidence" value="ECO:0007669"/>
    <property type="project" value="InterPro"/>
</dbReference>
<dbReference type="GO" id="GO:0006412">
    <property type="term" value="P:translation"/>
    <property type="evidence" value="ECO:0007669"/>
    <property type="project" value="UniProtKB-UniRule"/>
</dbReference>
<dbReference type="FunFam" id="4.10.410.60:FF:000001">
    <property type="entry name" value="50S ribosomal protein L35"/>
    <property type="match status" value="1"/>
</dbReference>
<dbReference type="Gene3D" id="4.10.410.60">
    <property type="match status" value="1"/>
</dbReference>
<dbReference type="HAMAP" id="MF_00514">
    <property type="entry name" value="Ribosomal_bL35"/>
    <property type="match status" value="1"/>
</dbReference>
<dbReference type="InterPro" id="IPR001706">
    <property type="entry name" value="Ribosomal_bL35"/>
</dbReference>
<dbReference type="InterPro" id="IPR021137">
    <property type="entry name" value="Ribosomal_bL35-like"/>
</dbReference>
<dbReference type="InterPro" id="IPR018265">
    <property type="entry name" value="Ribosomal_bL35_CS"/>
</dbReference>
<dbReference type="InterPro" id="IPR037229">
    <property type="entry name" value="Ribosomal_bL35_sf"/>
</dbReference>
<dbReference type="NCBIfam" id="TIGR00001">
    <property type="entry name" value="rpmI_bact"/>
    <property type="match status" value="1"/>
</dbReference>
<dbReference type="PANTHER" id="PTHR33343">
    <property type="entry name" value="54S RIBOSOMAL PROTEIN BL35M"/>
    <property type="match status" value="1"/>
</dbReference>
<dbReference type="PANTHER" id="PTHR33343:SF1">
    <property type="entry name" value="LARGE RIBOSOMAL SUBUNIT PROTEIN BL35M"/>
    <property type="match status" value="1"/>
</dbReference>
<dbReference type="Pfam" id="PF01632">
    <property type="entry name" value="Ribosomal_L35p"/>
    <property type="match status" value="1"/>
</dbReference>
<dbReference type="PRINTS" id="PR00064">
    <property type="entry name" value="RIBOSOMALL35"/>
</dbReference>
<dbReference type="SUPFAM" id="SSF143034">
    <property type="entry name" value="L35p-like"/>
    <property type="match status" value="1"/>
</dbReference>
<dbReference type="PROSITE" id="PS00936">
    <property type="entry name" value="RIBOSOMAL_L35"/>
    <property type="match status" value="1"/>
</dbReference>
<accession>Q88K25</accession>
<gene>
    <name evidence="1" type="primary">rpmI</name>
    <name type="ordered locus">PP_2467</name>
</gene>
<evidence type="ECO:0000255" key="1">
    <source>
        <dbReference type="HAMAP-Rule" id="MF_00514"/>
    </source>
</evidence>
<evidence type="ECO:0000305" key="2"/>
<name>RL35_PSEPK</name>
<sequence>MPKMKTKSGAAKRFLKTASGFKHKHAFKSHILTKMSTKRKRQLRGASLLHPSDVAKVERMLRVR</sequence>
<feature type="chain" id="PRO_0000177403" description="Large ribosomal subunit protein bL35">
    <location>
        <begin position="1"/>
        <end position="64"/>
    </location>
</feature>
<keyword id="KW-1185">Reference proteome</keyword>
<keyword id="KW-0687">Ribonucleoprotein</keyword>
<keyword id="KW-0689">Ribosomal protein</keyword>
<organism>
    <name type="scientific">Pseudomonas putida (strain ATCC 47054 / DSM 6125 / CFBP 8728 / NCIMB 11950 / KT2440)</name>
    <dbReference type="NCBI Taxonomy" id="160488"/>
    <lineage>
        <taxon>Bacteria</taxon>
        <taxon>Pseudomonadati</taxon>
        <taxon>Pseudomonadota</taxon>
        <taxon>Gammaproteobacteria</taxon>
        <taxon>Pseudomonadales</taxon>
        <taxon>Pseudomonadaceae</taxon>
        <taxon>Pseudomonas</taxon>
    </lineage>
</organism>
<proteinExistence type="inferred from homology"/>
<reference key="1">
    <citation type="journal article" date="2002" name="Environ. Microbiol.">
        <title>Complete genome sequence and comparative analysis of the metabolically versatile Pseudomonas putida KT2440.</title>
        <authorList>
            <person name="Nelson K.E."/>
            <person name="Weinel C."/>
            <person name="Paulsen I.T."/>
            <person name="Dodson R.J."/>
            <person name="Hilbert H."/>
            <person name="Martins dos Santos V.A.P."/>
            <person name="Fouts D.E."/>
            <person name="Gill S.R."/>
            <person name="Pop M."/>
            <person name="Holmes M."/>
            <person name="Brinkac L.M."/>
            <person name="Beanan M.J."/>
            <person name="DeBoy R.T."/>
            <person name="Daugherty S.C."/>
            <person name="Kolonay J.F."/>
            <person name="Madupu R."/>
            <person name="Nelson W.C."/>
            <person name="White O."/>
            <person name="Peterson J.D."/>
            <person name="Khouri H.M."/>
            <person name="Hance I."/>
            <person name="Chris Lee P."/>
            <person name="Holtzapple E.K."/>
            <person name="Scanlan D."/>
            <person name="Tran K."/>
            <person name="Moazzez A."/>
            <person name="Utterback T.R."/>
            <person name="Rizzo M."/>
            <person name="Lee K."/>
            <person name="Kosack D."/>
            <person name="Moestl D."/>
            <person name="Wedler H."/>
            <person name="Lauber J."/>
            <person name="Stjepandic D."/>
            <person name="Hoheisel J."/>
            <person name="Straetz M."/>
            <person name="Heim S."/>
            <person name="Kiewitz C."/>
            <person name="Eisen J.A."/>
            <person name="Timmis K.N."/>
            <person name="Duesterhoeft A."/>
            <person name="Tuemmler B."/>
            <person name="Fraser C.M."/>
        </authorList>
    </citation>
    <scope>NUCLEOTIDE SEQUENCE [LARGE SCALE GENOMIC DNA]</scope>
    <source>
        <strain>ATCC 47054 / DSM 6125 / CFBP 8728 / NCIMB 11950 / KT2440</strain>
    </source>
</reference>